<name>RQC2_SCHPO</name>
<proteinExistence type="evidence at protein level"/>
<sequence>MKQRFSALDIAAIAAELREQVVGCRLNNFYDLNARTFLLKFGKQDAKYSIVIESGFRAHLTKFDRENAPLSGFVTKLRKHIKSRRLTGVSQLGTDRVLVFTFGGGANDQDPDWTYYLVCEFFAAGNVLLLDGHYKILSLLRVVTFDKDQVYAVGQKYNLDKNNLVNDNKSQSTIPHMTAERLNILLDEISTAYASPTSINEPLPDQQLSSSTKPIKVPKPVSLRKALTIRLGEYGNALIEHCLRRSKLDPLFPACQLCADETKKNDLLAAFQEADSILAAVNKPPVKGYIFSLEQALTNAADPQHPEECTTLYEDFHPFQPLQLVQANRKCMEFPTYNECVDEFFSSIEAQKLKKRAHDRLATAERRLESAKEDQARKLQSLQDAQATCALRAQAIEMNPELVEAIISYINSLLNQGMDWLDIEKLIQSQKRRSPVAAAIQIPLKLIKNAVTVFLPNPESVDNSDESSETSDDDLDDSDDDNKVKEGKVSSKFIAVELDLSLGAFANARKQYELRREALIKETKTAEAASKALKSTQRKIEQDLKRSTTADTQRILLGRKTFFFEKFHWFISSEGYLVLGGRDAQQNELLFQKYCNTGDIFVCADLPKSSIIIVKNKNPHDPIPPNTLQQAGSLALASSKAWDSKTVISAWWVRIDEVSKLAPTGEILPTGSFAIRAKKNYLPPTVLIMGYGILWQLDEKSSERRKARRLEMEVVETQGKVSELKMEGTSVTSEDNIQDVVSEVSYNEDTNNQSTPDTTGSDIHIVSEKRGKKGSKVITAKKVSAKERREARRARRQTALEESLKAPISIEDATDPQTILAILKQKKAKKKHAAREMEISSQIPSNDSSNVQTPTAESEIEEDGVSEPISAEVIEDQSRNSEAENEKGLSTEQRDEKKHAKVESFQRQEMPRSLFEEIFFAIDSLTPNPQQQDTVINAVPTFAPYNAMTKFNQKVKVMPGTGKVGKAARESIAYFMKKLPKSSKEAAYLENLKDGEIVAPISVSRLKMVFGSSGNTKKSKK</sequence>
<reference key="1">
    <citation type="journal article" date="2002" name="Nature">
        <title>The genome sequence of Schizosaccharomyces pombe.</title>
        <authorList>
            <person name="Wood V."/>
            <person name="Gwilliam R."/>
            <person name="Rajandream M.A."/>
            <person name="Lyne M.H."/>
            <person name="Lyne R."/>
            <person name="Stewart A."/>
            <person name="Sgouros J.G."/>
            <person name="Peat N."/>
            <person name="Hayles J."/>
            <person name="Baker S.G."/>
            <person name="Basham D."/>
            <person name="Bowman S."/>
            <person name="Brooks K."/>
            <person name="Brown D."/>
            <person name="Brown S."/>
            <person name="Chillingworth T."/>
            <person name="Churcher C.M."/>
            <person name="Collins M."/>
            <person name="Connor R."/>
            <person name="Cronin A."/>
            <person name="Davis P."/>
            <person name="Feltwell T."/>
            <person name="Fraser A."/>
            <person name="Gentles S."/>
            <person name="Goble A."/>
            <person name="Hamlin N."/>
            <person name="Harris D.E."/>
            <person name="Hidalgo J."/>
            <person name="Hodgson G."/>
            <person name="Holroyd S."/>
            <person name="Hornsby T."/>
            <person name="Howarth S."/>
            <person name="Huckle E.J."/>
            <person name="Hunt S."/>
            <person name="Jagels K."/>
            <person name="James K.D."/>
            <person name="Jones L."/>
            <person name="Jones M."/>
            <person name="Leather S."/>
            <person name="McDonald S."/>
            <person name="McLean J."/>
            <person name="Mooney P."/>
            <person name="Moule S."/>
            <person name="Mungall K.L."/>
            <person name="Murphy L.D."/>
            <person name="Niblett D."/>
            <person name="Odell C."/>
            <person name="Oliver K."/>
            <person name="O'Neil S."/>
            <person name="Pearson D."/>
            <person name="Quail M.A."/>
            <person name="Rabbinowitsch E."/>
            <person name="Rutherford K.M."/>
            <person name="Rutter S."/>
            <person name="Saunders D."/>
            <person name="Seeger K."/>
            <person name="Sharp S."/>
            <person name="Skelton J."/>
            <person name="Simmonds M.N."/>
            <person name="Squares R."/>
            <person name="Squares S."/>
            <person name="Stevens K."/>
            <person name="Taylor K."/>
            <person name="Taylor R.G."/>
            <person name="Tivey A."/>
            <person name="Walsh S.V."/>
            <person name="Warren T."/>
            <person name="Whitehead S."/>
            <person name="Woodward J.R."/>
            <person name="Volckaert G."/>
            <person name="Aert R."/>
            <person name="Robben J."/>
            <person name="Grymonprez B."/>
            <person name="Weltjens I."/>
            <person name="Vanstreels E."/>
            <person name="Rieger M."/>
            <person name="Schaefer M."/>
            <person name="Mueller-Auer S."/>
            <person name="Gabel C."/>
            <person name="Fuchs M."/>
            <person name="Duesterhoeft A."/>
            <person name="Fritzc C."/>
            <person name="Holzer E."/>
            <person name="Moestl D."/>
            <person name="Hilbert H."/>
            <person name="Borzym K."/>
            <person name="Langer I."/>
            <person name="Beck A."/>
            <person name="Lehrach H."/>
            <person name="Reinhardt R."/>
            <person name="Pohl T.M."/>
            <person name="Eger P."/>
            <person name="Zimmermann W."/>
            <person name="Wedler H."/>
            <person name="Wambutt R."/>
            <person name="Purnelle B."/>
            <person name="Goffeau A."/>
            <person name="Cadieu E."/>
            <person name="Dreano S."/>
            <person name="Gloux S."/>
            <person name="Lelaure V."/>
            <person name="Mottier S."/>
            <person name="Galibert F."/>
            <person name="Aves S.J."/>
            <person name="Xiang Z."/>
            <person name="Hunt C."/>
            <person name="Moore K."/>
            <person name="Hurst S.M."/>
            <person name="Lucas M."/>
            <person name="Rochet M."/>
            <person name="Gaillardin C."/>
            <person name="Tallada V.A."/>
            <person name="Garzon A."/>
            <person name="Thode G."/>
            <person name="Daga R.R."/>
            <person name="Cruzado L."/>
            <person name="Jimenez J."/>
            <person name="Sanchez M."/>
            <person name="del Rey F."/>
            <person name="Benito J."/>
            <person name="Dominguez A."/>
            <person name="Revuelta J.L."/>
            <person name="Moreno S."/>
            <person name="Armstrong J."/>
            <person name="Forsburg S.L."/>
            <person name="Cerutti L."/>
            <person name="Lowe T."/>
            <person name="McCombie W.R."/>
            <person name="Paulsen I."/>
            <person name="Potashkin J."/>
            <person name="Shpakovski G.V."/>
            <person name="Ussery D."/>
            <person name="Barrell B.G."/>
            <person name="Nurse P."/>
        </authorList>
    </citation>
    <scope>NUCLEOTIDE SEQUENCE [LARGE SCALE GENOMIC DNA]</scope>
    <source>
        <strain>972 / ATCC 24843</strain>
    </source>
</reference>
<reference key="2">
    <citation type="journal article" date="2006" name="Nat. Biotechnol.">
        <title>ORFeome cloning and global analysis of protein localization in the fission yeast Schizosaccharomyces pombe.</title>
        <authorList>
            <person name="Matsuyama A."/>
            <person name="Arai R."/>
            <person name="Yashiroda Y."/>
            <person name="Shirai A."/>
            <person name="Kamata A."/>
            <person name="Sekido S."/>
            <person name="Kobayashi Y."/>
            <person name="Hashimoto A."/>
            <person name="Hamamoto M."/>
            <person name="Hiraoka Y."/>
            <person name="Horinouchi S."/>
            <person name="Yoshida M."/>
        </authorList>
    </citation>
    <scope>SUBCELLULAR LOCATION [LARGE SCALE ANALYSIS]</scope>
</reference>
<reference key="3">
    <citation type="journal article" date="2008" name="J. Proteome Res.">
        <title>Phosphoproteome analysis of fission yeast.</title>
        <authorList>
            <person name="Wilson-Grady J.T."/>
            <person name="Villen J."/>
            <person name="Gygi S.P."/>
        </authorList>
    </citation>
    <scope>PHOSPHORYLATION [LARGE SCALE ANALYSIS] AT SER-478</scope>
    <scope>IDENTIFICATION BY MASS SPECTROMETRY</scope>
</reference>
<reference key="4">
    <citation type="journal article" date="2014" name="Biol. Open">
        <title>Fission yeast mtr1p regulates interphase microtubule cortical dwell-time.</title>
        <authorList>
            <person name="Carlier-Grynkorn F."/>
            <person name="Ji L."/>
            <person name="Fraisier V."/>
            <person name="Lombard B."/>
            <person name="Dingli F."/>
            <person name="Loew D."/>
            <person name="Paoletti A."/>
            <person name="Ronot X."/>
            <person name="Tran P.T."/>
        </authorList>
    </citation>
    <scope>SUBCELLULAR LOCATION</scope>
</reference>
<gene>
    <name evidence="7" type="primary">mtr1</name>
    <name evidence="9" type="ORF">SPCC132.01c</name>
    <name type="ORF">SPCC1322.17c</name>
</gene>
<comment type="function">
    <text evidence="1">Key component of the ribosome quality control complex (RQC), a ribosome-associated complex that mediates the extraction of incompletely synthesized nascent chains from stalled ribosomes as well as their ubiquitin-mediated proteasomal degradation. Thereby, frees 60S subunit ribosomes from the stalled translation complex and prevents the accumulation of nascent polypeptide chains that are potentially toxic for the cell. Within the RQC complex, mtr1/rqc2 specifically binds stalled 60S ribosomal subunits by recognizing an exposed, nascent chain-conjugated tRNA moiety and promotes the recruitment of rkr1/ltn1 to stalled 60S subunits. Following binding to stalled 60S ribosomal subunits, mtr1/rqc2 mediates CAT tailing by recruiting alanine- and threonine-charged tRNA to the A-site and directing the elongation of stalled nascent chains independently of mRNA or 40S subunits, leading to non-templated C-terminal Ala and Thr extensions (CAT tails). CAT tails promote the rkr1/ltn1-mediated ubiquitination of incompletely synthesized nascent polypeptides: CAT tailing facilitates rkr1/ltn1-dependent ubiquitination by exposing lysine residues that would otherwise remain buried in the ribosomal exit tunnel. Following ubiquitination, incompletely synthesized nascent polypeptides are recognized by CDC48 and degraded by the proteasome. CAT-tailed proteins tend to aggregate and sequester chaperones and can induce proteotoxic stress; their rkr1/ltn1-dependent ubiquitination and degradation is required to prevent proteotoxic stress.</text>
</comment>
<comment type="subunit">
    <text evidence="1">Component of the ribosome quality control complex (RQC), composed of the E3 ubiquitin ligase rkr1/ltn1, rqc1 and mtr1/rqc2, as well as cdc48 and its ubiquitin-binding cofactors associated with the 60S ribosomal subunit. RQC2 binds to the 40S-binding surface of tRNAs.</text>
</comment>
<comment type="subcellular location">
    <subcellularLocation>
        <location evidence="4 6">Cytoplasm</location>
    </subcellularLocation>
</comment>
<comment type="similarity">
    <text evidence="8">Belongs to the NEMF family.</text>
</comment>
<accession>Q9USN8</accession>
<accession>O94551</accession>
<feature type="chain" id="PRO_0000116820" description="Ribosome quality control complex subunit 2">
    <location>
        <begin position="1"/>
        <end position="1021"/>
    </location>
</feature>
<feature type="region of interest" description="Disordered" evidence="3">
    <location>
        <begin position="457"/>
        <end position="484"/>
    </location>
</feature>
<feature type="region of interest" description="Disordered" evidence="3">
    <location>
        <begin position="746"/>
        <end position="801"/>
    </location>
</feature>
<feature type="region of interest" description="Disordered" evidence="3">
    <location>
        <begin position="832"/>
        <end position="905"/>
    </location>
</feature>
<feature type="coiled-coil region" evidence="2">
    <location>
        <begin position="348"/>
        <end position="388"/>
    </location>
</feature>
<feature type="coiled-coil region" evidence="2">
    <location>
        <begin position="507"/>
        <end position="546"/>
    </location>
</feature>
<feature type="coiled-coil region" evidence="2">
    <location>
        <begin position="698"/>
        <end position="727"/>
    </location>
</feature>
<feature type="compositionally biased region" description="Acidic residues" evidence="3">
    <location>
        <begin position="462"/>
        <end position="480"/>
    </location>
</feature>
<feature type="compositionally biased region" description="Polar residues" evidence="3">
    <location>
        <begin position="746"/>
        <end position="761"/>
    </location>
</feature>
<feature type="compositionally biased region" description="Polar residues" evidence="3">
    <location>
        <begin position="839"/>
        <end position="856"/>
    </location>
</feature>
<feature type="compositionally biased region" description="Basic and acidic residues" evidence="3">
    <location>
        <begin position="876"/>
        <end position="905"/>
    </location>
</feature>
<feature type="modified residue" description="Phosphoserine" evidence="5">
    <location>
        <position position="478"/>
    </location>
</feature>
<organism>
    <name type="scientific">Schizosaccharomyces pombe (strain 972 / ATCC 24843)</name>
    <name type="common">Fission yeast</name>
    <dbReference type="NCBI Taxonomy" id="284812"/>
    <lineage>
        <taxon>Eukaryota</taxon>
        <taxon>Fungi</taxon>
        <taxon>Dikarya</taxon>
        <taxon>Ascomycota</taxon>
        <taxon>Taphrinomycotina</taxon>
        <taxon>Schizosaccharomycetes</taxon>
        <taxon>Schizosaccharomycetales</taxon>
        <taxon>Schizosaccharomycetaceae</taxon>
        <taxon>Schizosaccharomyces</taxon>
    </lineage>
</organism>
<protein>
    <recommendedName>
        <fullName evidence="1">Ribosome quality control complex subunit 2</fullName>
    </recommendedName>
    <alternativeName>
        <fullName evidence="7">Microtubule regulator protein 1</fullName>
    </alternativeName>
</protein>
<dbReference type="EMBL" id="CU329672">
    <property type="protein sequence ID" value="CAA22870.2"/>
    <property type="molecule type" value="Genomic_DNA"/>
</dbReference>
<dbReference type="PIR" id="T40928">
    <property type="entry name" value="T40928"/>
</dbReference>
<dbReference type="RefSeq" id="NP_588145.2">
    <property type="nucleotide sequence ID" value="NM_001023135.2"/>
</dbReference>
<dbReference type="SMR" id="Q9USN8"/>
<dbReference type="BioGRID" id="275330">
    <property type="interactions" value="5"/>
</dbReference>
<dbReference type="FunCoup" id="Q9USN8">
    <property type="interactions" value="562"/>
</dbReference>
<dbReference type="STRING" id="284812.Q9USN8"/>
<dbReference type="iPTMnet" id="Q9USN8"/>
<dbReference type="PaxDb" id="4896-SPCC132.01c.1"/>
<dbReference type="EnsemblFungi" id="SPCC132.01c.1">
    <property type="protein sequence ID" value="SPCC132.01c.1:pep"/>
    <property type="gene ID" value="SPCC132.01c"/>
</dbReference>
<dbReference type="GeneID" id="2538747"/>
<dbReference type="KEGG" id="spo:2538747"/>
<dbReference type="PomBase" id="SPCC132.01c">
    <property type="gene designation" value="mtr1"/>
</dbReference>
<dbReference type="VEuPathDB" id="FungiDB:SPCC132.01c"/>
<dbReference type="eggNOG" id="KOG2030">
    <property type="taxonomic scope" value="Eukaryota"/>
</dbReference>
<dbReference type="HOGENOM" id="CLU_003612_1_1_1"/>
<dbReference type="InParanoid" id="Q9USN8"/>
<dbReference type="OMA" id="MFLEFFA"/>
<dbReference type="PhylomeDB" id="Q9USN8"/>
<dbReference type="PRO" id="PR:Q9USN8"/>
<dbReference type="Proteomes" id="UP000002485">
    <property type="component" value="Chromosome III"/>
</dbReference>
<dbReference type="GO" id="GO:0005737">
    <property type="term" value="C:cytoplasm"/>
    <property type="evidence" value="ECO:0000314"/>
    <property type="project" value="PomBase"/>
</dbReference>
<dbReference type="GO" id="GO:0005829">
    <property type="term" value="C:cytosol"/>
    <property type="evidence" value="ECO:0007005"/>
    <property type="project" value="PomBase"/>
</dbReference>
<dbReference type="GO" id="GO:1990112">
    <property type="term" value="C:RQC complex"/>
    <property type="evidence" value="ECO:0000318"/>
    <property type="project" value="GO_Central"/>
</dbReference>
<dbReference type="GO" id="GO:0043023">
    <property type="term" value="F:ribosomal large subunit binding"/>
    <property type="evidence" value="ECO:0000318"/>
    <property type="project" value="GO_Central"/>
</dbReference>
<dbReference type="GO" id="GO:0000049">
    <property type="term" value="F:tRNA binding"/>
    <property type="evidence" value="ECO:0000318"/>
    <property type="project" value="GO_Central"/>
</dbReference>
<dbReference type="GO" id="GO:0140708">
    <property type="term" value="P:CAT tailing"/>
    <property type="evidence" value="ECO:0000250"/>
    <property type="project" value="UniProtKB"/>
</dbReference>
<dbReference type="GO" id="GO:0072344">
    <property type="term" value="P:rescue of stalled ribosome"/>
    <property type="evidence" value="ECO:0000318"/>
    <property type="project" value="GO_Central"/>
</dbReference>
<dbReference type="GO" id="GO:1990116">
    <property type="term" value="P:ribosome-associated ubiquitin-dependent protein catabolic process"/>
    <property type="evidence" value="ECO:0000318"/>
    <property type="project" value="GO_Central"/>
</dbReference>
<dbReference type="FunFam" id="2.30.310.10:FF:000003">
    <property type="entry name" value="Zinc knuckle domain containing protein"/>
    <property type="match status" value="1"/>
</dbReference>
<dbReference type="Gene3D" id="2.30.310.10">
    <property type="entry name" value="ibrinogen binding protein from staphylococcus aureus domain"/>
    <property type="match status" value="1"/>
</dbReference>
<dbReference type="InterPro" id="IPR021846">
    <property type="entry name" value="NFACT-C"/>
</dbReference>
<dbReference type="InterPro" id="IPR008532">
    <property type="entry name" value="NFACT_RNA-bd"/>
</dbReference>
<dbReference type="InterPro" id="IPR051608">
    <property type="entry name" value="RQC_Subunit_NEMF"/>
</dbReference>
<dbReference type="PANTHER" id="PTHR15239">
    <property type="entry name" value="NUCLEAR EXPORT MEDIATOR FACTOR NEMF"/>
    <property type="match status" value="1"/>
</dbReference>
<dbReference type="PANTHER" id="PTHR15239:SF6">
    <property type="entry name" value="RIBOSOME QUALITY CONTROL COMPLEX SUBUNIT NEMF"/>
    <property type="match status" value="1"/>
</dbReference>
<dbReference type="Pfam" id="PF11923">
    <property type="entry name" value="NFACT-C"/>
    <property type="match status" value="1"/>
</dbReference>
<dbReference type="Pfam" id="PF05670">
    <property type="entry name" value="NFACT-R_1"/>
    <property type="match status" value="1"/>
</dbReference>
<dbReference type="Pfam" id="PF05833">
    <property type="entry name" value="NFACT_N"/>
    <property type="match status" value="1"/>
</dbReference>
<keyword id="KW-0175">Coiled coil</keyword>
<keyword id="KW-0963">Cytoplasm</keyword>
<keyword id="KW-0597">Phosphoprotein</keyword>
<keyword id="KW-1185">Reference proteome</keyword>
<evidence type="ECO:0000250" key="1">
    <source>
        <dbReference type="UniProtKB" id="Q12532"/>
    </source>
</evidence>
<evidence type="ECO:0000255" key="2"/>
<evidence type="ECO:0000256" key="3">
    <source>
        <dbReference type="SAM" id="MobiDB-lite"/>
    </source>
</evidence>
<evidence type="ECO:0000269" key="4">
    <source>
    </source>
</evidence>
<evidence type="ECO:0000269" key="5">
    <source>
    </source>
</evidence>
<evidence type="ECO:0000269" key="6">
    <source>
    </source>
</evidence>
<evidence type="ECO:0000303" key="7">
    <source>
    </source>
</evidence>
<evidence type="ECO:0000305" key="8"/>
<evidence type="ECO:0000312" key="9">
    <source>
        <dbReference type="PomBase" id="SPCC132.01c"/>
    </source>
</evidence>